<accession>B0BB61</accession>
<organism>
    <name type="scientific">Chlamydia trachomatis serovar L2b (strain UCH-1/proctitis)</name>
    <dbReference type="NCBI Taxonomy" id="471473"/>
    <lineage>
        <taxon>Bacteria</taxon>
        <taxon>Pseudomonadati</taxon>
        <taxon>Chlamydiota</taxon>
        <taxon>Chlamydiia</taxon>
        <taxon>Chlamydiales</taxon>
        <taxon>Chlamydiaceae</taxon>
        <taxon>Chlamydia/Chlamydophila group</taxon>
        <taxon>Chlamydia</taxon>
    </lineage>
</organism>
<feature type="chain" id="PRO_1000121096" description="DNA replication and repair protein RecF">
    <location>
        <begin position="1"/>
        <end position="365"/>
    </location>
</feature>
<feature type="binding site" evidence="1">
    <location>
        <begin position="30"/>
        <end position="37"/>
    </location>
    <ligand>
        <name>ATP</name>
        <dbReference type="ChEBI" id="CHEBI:30616"/>
    </ligand>
</feature>
<evidence type="ECO:0000255" key="1">
    <source>
        <dbReference type="HAMAP-Rule" id="MF_00365"/>
    </source>
</evidence>
<protein>
    <recommendedName>
        <fullName evidence="1">DNA replication and repair protein RecF</fullName>
    </recommendedName>
</protein>
<comment type="function">
    <text evidence="1">The RecF protein is involved in DNA metabolism; it is required for DNA replication and normal SOS inducibility. RecF binds preferentially to single-stranded, linear DNA. It also seems to bind ATP.</text>
</comment>
<comment type="subcellular location">
    <subcellularLocation>
        <location evidence="1">Cytoplasm</location>
    </subcellularLocation>
</comment>
<comment type="similarity">
    <text evidence="1">Belongs to the RecF family.</text>
</comment>
<name>RECF_CHLTB</name>
<proteinExistence type="inferred from homology"/>
<reference key="1">
    <citation type="journal article" date="2008" name="Genome Res.">
        <title>Chlamydia trachomatis: genome sequence analysis of lymphogranuloma venereum isolates.</title>
        <authorList>
            <person name="Thomson N.R."/>
            <person name="Holden M.T.G."/>
            <person name="Carder C."/>
            <person name="Lennard N."/>
            <person name="Lockey S.J."/>
            <person name="Marsh P."/>
            <person name="Skipp P."/>
            <person name="O'Connor C.D."/>
            <person name="Goodhead I."/>
            <person name="Norbertzcak H."/>
            <person name="Harris B."/>
            <person name="Ormond D."/>
            <person name="Rance R."/>
            <person name="Quail M.A."/>
            <person name="Parkhill J."/>
            <person name="Stephens R.S."/>
            <person name="Clarke I.N."/>
        </authorList>
    </citation>
    <scope>NUCLEOTIDE SEQUENCE [LARGE SCALE GENOMIC DNA]</scope>
    <source>
        <strain>UCH-1/proctitis</strain>
    </source>
</reference>
<keyword id="KW-0067">ATP-binding</keyword>
<keyword id="KW-0963">Cytoplasm</keyword>
<keyword id="KW-0227">DNA damage</keyword>
<keyword id="KW-0234">DNA repair</keyword>
<keyword id="KW-0235">DNA replication</keyword>
<keyword id="KW-0238">DNA-binding</keyword>
<keyword id="KW-0547">Nucleotide-binding</keyword>
<keyword id="KW-0742">SOS response</keyword>
<gene>
    <name evidence="1" type="primary">recF</name>
    <name type="ordered locus">CTLon_0325</name>
</gene>
<sequence>MRVLSLFLKDFRNYTDLRLELGPEMNSIFGLNAQGKTNLLEALYILSLGRSFRTSRLTDAIRFGASHFFIEAVFSHKEVFHTLSIQVDKKGKKILFDGAPITKLSELVGLFPVILFSIKDIAIIEGSPSERRRFLDLLLAQASDKYTEHISLYHKALDQRNASIKAQNQKAISAWNSPLIAYGSLVAFLRNECTKKLNTIFQTLWDNTLKETLSLRYESSLITEESPTLNDIASNYYEQLRIANTKDLDLGYTMVGPHRDELLLTINDLPVAKFSSEGQKHSLLAVLRFAECVYLQEEFCIHPLLCMDDIHACLDQQRLDQLLQLSNSLGQVVTTSTICPDHRSTTSCIFHVTQAQVSLVAPQSL</sequence>
<dbReference type="EMBL" id="AM884177">
    <property type="protein sequence ID" value="CAP06723.1"/>
    <property type="molecule type" value="Genomic_DNA"/>
</dbReference>
<dbReference type="RefSeq" id="WP_009871423.1">
    <property type="nucleotide sequence ID" value="NC_010280.2"/>
</dbReference>
<dbReference type="SMR" id="B0BB61"/>
<dbReference type="KEGG" id="ctl:CTLon_0325"/>
<dbReference type="HOGENOM" id="CLU_040267_0_1_0"/>
<dbReference type="Proteomes" id="UP001154401">
    <property type="component" value="Chromosome"/>
</dbReference>
<dbReference type="GO" id="GO:0005737">
    <property type="term" value="C:cytoplasm"/>
    <property type="evidence" value="ECO:0007669"/>
    <property type="project" value="UniProtKB-SubCell"/>
</dbReference>
<dbReference type="GO" id="GO:0005524">
    <property type="term" value="F:ATP binding"/>
    <property type="evidence" value="ECO:0007669"/>
    <property type="project" value="UniProtKB-UniRule"/>
</dbReference>
<dbReference type="GO" id="GO:0003697">
    <property type="term" value="F:single-stranded DNA binding"/>
    <property type="evidence" value="ECO:0007669"/>
    <property type="project" value="UniProtKB-UniRule"/>
</dbReference>
<dbReference type="GO" id="GO:0006260">
    <property type="term" value="P:DNA replication"/>
    <property type="evidence" value="ECO:0007669"/>
    <property type="project" value="UniProtKB-UniRule"/>
</dbReference>
<dbReference type="GO" id="GO:0000731">
    <property type="term" value="P:DNA synthesis involved in DNA repair"/>
    <property type="evidence" value="ECO:0007669"/>
    <property type="project" value="TreeGrafter"/>
</dbReference>
<dbReference type="GO" id="GO:0006302">
    <property type="term" value="P:double-strand break repair"/>
    <property type="evidence" value="ECO:0007669"/>
    <property type="project" value="TreeGrafter"/>
</dbReference>
<dbReference type="GO" id="GO:0009432">
    <property type="term" value="P:SOS response"/>
    <property type="evidence" value="ECO:0007669"/>
    <property type="project" value="UniProtKB-UniRule"/>
</dbReference>
<dbReference type="Gene3D" id="3.40.50.300">
    <property type="entry name" value="P-loop containing nucleotide triphosphate hydrolases"/>
    <property type="match status" value="1"/>
</dbReference>
<dbReference type="Gene3D" id="1.20.1050.90">
    <property type="entry name" value="RecF/RecN/SMC, N-terminal domain"/>
    <property type="match status" value="1"/>
</dbReference>
<dbReference type="HAMAP" id="MF_00365">
    <property type="entry name" value="RecF"/>
    <property type="match status" value="1"/>
</dbReference>
<dbReference type="InterPro" id="IPR001238">
    <property type="entry name" value="DNA-binding_RecF"/>
</dbReference>
<dbReference type="InterPro" id="IPR018078">
    <property type="entry name" value="DNA-binding_RecF_CS"/>
</dbReference>
<dbReference type="InterPro" id="IPR027417">
    <property type="entry name" value="P-loop_NTPase"/>
</dbReference>
<dbReference type="InterPro" id="IPR003395">
    <property type="entry name" value="RecF/RecN/SMC_N"/>
</dbReference>
<dbReference type="InterPro" id="IPR042174">
    <property type="entry name" value="RecF_2"/>
</dbReference>
<dbReference type="NCBIfam" id="TIGR00611">
    <property type="entry name" value="recf"/>
    <property type="match status" value="1"/>
</dbReference>
<dbReference type="PANTHER" id="PTHR32182">
    <property type="entry name" value="DNA REPLICATION AND REPAIR PROTEIN RECF"/>
    <property type="match status" value="1"/>
</dbReference>
<dbReference type="PANTHER" id="PTHR32182:SF0">
    <property type="entry name" value="DNA REPLICATION AND REPAIR PROTEIN RECF"/>
    <property type="match status" value="1"/>
</dbReference>
<dbReference type="Pfam" id="PF02463">
    <property type="entry name" value="SMC_N"/>
    <property type="match status" value="1"/>
</dbReference>
<dbReference type="SUPFAM" id="SSF52540">
    <property type="entry name" value="P-loop containing nucleoside triphosphate hydrolases"/>
    <property type="match status" value="1"/>
</dbReference>
<dbReference type="PROSITE" id="PS00617">
    <property type="entry name" value="RECF_1"/>
    <property type="match status" value="1"/>
</dbReference>
<dbReference type="PROSITE" id="PS00618">
    <property type="entry name" value="RECF_2"/>
    <property type="match status" value="1"/>
</dbReference>